<name>GDE_RABIT</name>
<accession>P35574</accession>
<feature type="chain" id="PRO_0000087451" description="Glycogen debranching enzyme">
    <location>
        <begin position="1"/>
        <end position="1555"/>
    </location>
</feature>
<feature type="region of interest" description="4-alpha-glucanotransferase">
    <location>
        <begin position="1"/>
        <end status="unknown"/>
    </location>
</feature>
<feature type="region of interest" description="Amylo-1,6-glucosidase">
    <location>
        <begin status="unknown"/>
        <end position="1555"/>
    </location>
</feature>
<feature type="active site" evidence="1">
    <location>
        <position position="549"/>
    </location>
</feature>
<feature type="active site" evidence="1">
    <location>
        <position position="552"/>
    </location>
</feature>
<feature type="active site" evidence="1">
    <location>
        <position position="650"/>
    </location>
</feature>
<feature type="modified residue" description="Phosphoserine" evidence="2">
    <location>
        <position position="87"/>
    </location>
</feature>
<reference key="1">
    <citation type="journal article" date="1993" name="Arch. Biochem. Biophys.">
        <title>Molecular cloning, sequencing, and analysis of the cDNA for rabbit muscle glycogen debranching enzyme.</title>
        <authorList>
            <person name="Liu W."/>
            <person name="de Castro M.L."/>
            <person name="Takrama J."/>
            <person name="Bilous P.T."/>
            <person name="Vinayagamoorthy T."/>
            <person name="Madsen N.B."/>
            <person name="Bleackley R.C."/>
        </authorList>
    </citation>
    <scope>NUCLEOTIDE SEQUENCE [MRNA]</scope>
    <scope>PARTIAL PROTEIN SEQUENCE</scope>
    <source>
        <tissue>Muscle</tissue>
    </source>
</reference>
<sequence>MGNSFDFGVLLILLKYFKSSRSQNGHSKQIRILLLNEMEKLEKTLFRLEQGFELQFRLGPTLQGKPVTVFTNYPFPGETFNREKFRSLEWENPTEREDDSDKYCKLNLQQSGSFQYYFLQGNEKSGGGYIVVDPILRVGADNHMLHLDCVTLQTFLAKCLGPFDEWESRLRVAKESGYNMIHFTPLQTLGLSRSCYSLADQLELNPDFSRPHKKYTWSDVGQLVEKLKREWNVLCITDVVYNHTAANSKWIQEHPECAYNLVNSPHLKPAWVLDRALWHFSCDVAEGKYKNRGVPALIENDHHLNCIRKVIWEDIFPKLHLWEFFQVDVYKAVEKFRGLLTQETWRVIKSDPKQHLKIIQDPEYRRFGCTVDMNIALATFIPHDNGPAAIEECCNWFRKRIEELNSEKHQLMNYHQEQAVNCLLGNVFYERLAGHGPKLGPVTRKYPLVTRYFTFPFEEMPVSTEETMIHLPNKACFFMAHNGWVMGDDPLRNFAEPGSDVYLRRELICWGDSVKLRYGTKPEDCPYLWAHMRKYTEIIATYFQGVRLDNCHSTPLHVAEYMLDAARKLQPNLYVVAELFTGSEDLDNIFVTRLGISSLIREAMSAYNSHEEGRLVYRYGGEPVGSFVQPCLRPLMPAIAHALFMDITHDNECPIVHRSVYDALPSTTIVSMACCASGSTRGYDELVPHQISVVSEERFYTKWNPEALPSNAGEVNFQSGIIAARCAINKLHQELGAKGFIQVYVDQVDEDIVAVTRHSPSIHQSFVAVSRTAFRNPKTSFYSKDVPQMCIPGKIEEVVLEARTIERNISPYRKDENSINGMPNITVEIREHIQLNESRIVKQAGVTTKGPNEYIQEIEFENLSPGSVIIFRVSLDPHAQVAVGILRNHLTQFSAHFKAGSLAVDNSDPILKIPFASIASKLTLAEINQILYRCESEEQEDGGGCYDIPNWSSLKYAGLQGLMSVLAEIRPKNDLGHPFCDNLRSGDWMIDYVSGRLISRSGTIAEVGKWLQAMFFYLKQIPRYLIPCYFDAILIGAYTTLLDIAWKQMSSFVQTGSTFVKHLSLGSVQMCGVGKFPSLPLLSPSLTDVPYRLNEITKEKEQCCVSLAAGLPHFSSGIFRCWGRDTFIALRGLLLITGRYLEARNIILAFAGTLRHGLIPNLLGEGTYARYNCRDAVWWWLQCIQDYCKMVPNGLDILKCPVSRMYPTDDSAPLPAGTLDQPLFDVIQEAMQRHMQGIQFRERNAGPQIDRNMKDEGFTVIAGVNEETGFVYGGNRFNCGTWMDKMGESDRARNRGIPATPRDGSAVEIVGLCKSTVRWLLELSKKNIFPYHEVRVKRHGKVVTVSYEEWNRKIQDNFEKRFHVSEDPSASNEEHPNLVHKRGIYKDSYGASSPWCDYQLRPNFTIAMVVAPELFTAEKAWKALEIAEKKLLGPLGMKTLDPDDMVYCGIYDNALDNDNYNLAKGFNYHQGPEWLWPVGYFLRAKLYFSKLMDRETNARTIFLVKNVLSRHYVHLERSPWKGLPELTNENGQYCPFSCETQAWSIATILETLYDL</sequence>
<comment type="function">
    <text>Multifunctional enzyme acting as 1,4-alpha-D-glucan:1,4-alpha-D-glucan 4-alpha-D-glycosyltransferase and amylo-1,6-glucosidase in glycogen degradation.</text>
</comment>
<comment type="catalytic activity">
    <reaction>
        <text>Transfers a segment of a (1-&gt;4)-alpha-D-glucan to a new position in an acceptor, which may be glucose or a (1-&gt;4)-alpha-D-glucan.</text>
        <dbReference type="EC" id="2.4.1.25"/>
    </reaction>
</comment>
<comment type="catalytic activity">
    <reaction>
        <text>Hydrolysis of (1-&gt;6)-alpha-D-glucosidic branch linkages in glycogen phosphorylase limit dextrin.</text>
        <dbReference type="EC" id="3.2.1.33"/>
    </reaction>
</comment>
<comment type="subunit">
    <text evidence="1">Monomer. Interacts with NHLRC1/malin (By similarity).</text>
</comment>
<comment type="subcellular location">
    <subcellularLocation>
        <location evidence="1">Cytoplasm</location>
    </subcellularLocation>
    <text evidence="1">Under glycogenolytic conditions localizes to the nucleus.</text>
</comment>
<comment type="PTM">
    <text>The N-terminus is blocked.</text>
</comment>
<comment type="PTM">
    <text evidence="1">Ubiquitinated.</text>
</comment>
<comment type="similarity">
    <text evidence="3">Belongs to the glycogen debranching enzyme family.</text>
</comment>
<organism>
    <name type="scientific">Oryctolagus cuniculus</name>
    <name type="common">Rabbit</name>
    <dbReference type="NCBI Taxonomy" id="9986"/>
    <lineage>
        <taxon>Eukaryota</taxon>
        <taxon>Metazoa</taxon>
        <taxon>Chordata</taxon>
        <taxon>Craniata</taxon>
        <taxon>Vertebrata</taxon>
        <taxon>Euteleostomi</taxon>
        <taxon>Mammalia</taxon>
        <taxon>Eutheria</taxon>
        <taxon>Euarchontoglires</taxon>
        <taxon>Glires</taxon>
        <taxon>Lagomorpha</taxon>
        <taxon>Leporidae</taxon>
        <taxon>Oryctolagus</taxon>
    </lineage>
</organism>
<gene>
    <name type="primary">AGL</name>
</gene>
<dbReference type="EC" id="2.4.1.25"/>
<dbReference type="EC" id="3.2.1.33"/>
<dbReference type="EMBL" id="L10605">
    <property type="protein sequence ID" value="AAA16364.1"/>
    <property type="molecule type" value="mRNA"/>
</dbReference>
<dbReference type="PIR" id="S38758">
    <property type="entry name" value="S38758"/>
</dbReference>
<dbReference type="RefSeq" id="NP_001075716.1">
    <property type="nucleotide sequence ID" value="NM_001082247.1"/>
</dbReference>
<dbReference type="SMR" id="P35574"/>
<dbReference type="FunCoup" id="P35574">
    <property type="interactions" value="1655"/>
</dbReference>
<dbReference type="STRING" id="9986.ENSOCUP00000019854"/>
<dbReference type="BindingDB" id="P35574"/>
<dbReference type="ChEMBL" id="CHEMBL5273"/>
<dbReference type="DrugCentral" id="P35574"/>
<dbReference type="CAZy" id="GH13">
    <property type="family name" value="Glycoside Hydrolase Family 13"/>
</dbReference>
<dbReference type="CAZy" id="GH133">
    <property type="family name" value="Glycoside Hydrolase Family 133"/>
</dbReference>
<dbReference type="PaxDb" id="9986-ENSOCUP00000019854"/>
<dbReference type="GeneID" id="100009066"/>
<dbReference type="KEGG" id="ocu:100009066"/>
<dbReference type="CTD" id="178"/>
<dbReference type="eggNOG" id="KOG3625">
    <property type="taxonomic scope" value="Eukaryota"/>
</dbReference>
<dbReference type="InParanoid" id="P35574"/>
<dbReference type="OrthoDB" id="10248904at2759"/>
<dbReference type="PRO" id="PR:P35574"/>
<dbReference type="Proteomes" id="UP000001811">
    <property type="component" value="Unplaced"/>
</dbReference>
<dbReference type="GO" id="GO:0005737">
    <property type="term" value="C:cytoplasm"/>
    <property type="evidence" value="ECO:0000250"/>
    <property type="project" value="UniProtKB"/>
</dbReference>
<dbReference type="GO" id="GO:0004134">
    <property type="term" value="F:4-alpha-glucanotransferase activity"/>
    <property type="evidence" value="ECO:0007669"/>
    <property type="project" value="UniProtKB-EC"/>
</dbReference>
<dbReference type="GO" id="GO:0004135">
    <property type="term" value="F:amylo-alpha-1,6-glucosidase activity"/>
    <property type="evidence" value="ECO:0007669"/>
    <property type="project" value="UniProtKB-EC"/>
</dbReference>
<dbReference type="GO" id="GO:0005978">
    <property type="term" value="P:glycogen biosynthetic process"/>
    <property type="evidence" value="ECO:0007669"/>
    <property type="project" value="UniProtKB-KW"/>
</dbReference>
<dbReference type="GO" id="GO:0005980">
    <property type="term" value="P:glycogen catabolic process"/>
    <property type="evidence" value="ECO:0007669"/>
    <property type="project" value="InterPro"/>
</dbReference>
<dbReference type="CDD" id="cd11327">
    <property type="entry name" value="AmyAc_Glg_debranch_2"/>
    <property type="match status" value="1"/>
</dbReference>
<dbReference type="FunFam" id="3.20.20.80:FF:000307">
    <property type="entry name" value="Glycogen debranching enzyme"/>
    <property type="match status" value="1"/>
</dbReference>
<dbReference type="FunFam" id="1.50.10.10:FF:000039">
    <property type="entry name" value="Glycogen debranching enzyme Gdb1, putative"/>
    <property type="match status" value="1"/>
</dbReference>
<dbReference type="FunFam" id="3.20.20.80:FF:000051">
    <property type="entry name" value="glycogen debranching enzyme isoform X2"/>
    <property type="match status" value="1"/>
</dbReference>
<dbReference type="Gene3D" id="3.20.20.80">
    <property type="entry name" value="Glycosidases"/>
    <property type="match status" value="2"/>
</dbReference>
<dbReference type="InterPro" id="IPR008928">
    <property type="entry name" value="6-hairpin_glycosidase_sf"/>
</dbReference>
<dbReference type="InterPro" id="IPR010401">
    <property type="entry name" value="AGL/Gdb1"/>
</dbReference>
<dbReference type="InterPro" id="IPR032788">
    <property type="entry name" value="AGL_central"/>
</dbReference>
<dbReference type="InterPro" id="IPR029436">
    <property type="entry name" value="AGL_euk_N"/>
</dbReference>
<dbReference type="InterPro" id="IPR032792">
    <property type="entry name" value="AGL_glucanoTrfase"/>
</dbReference>
<dbReference type="InterPro" id="IPR032790">
    <property type="entry name" value="GDE_C"/>
</dbReference>
<dbReference type="InterPro" id="IPR006421">
    <property type="entry name" value="Glycogen_debranch_met"/>
</dbReference>
<dbReference type="InterPro" id="IPR017853">
    <property type="entry name" value="Glycoside_hydrolase_SF"/>
</dbReference>
<dbReference type="NCBIfam" id="TIGR01531">
    <property type="entry name" value="glyc_debranch"/>
    <property type="match status" value="1"/>
</dbReference>
<dbReference type="PANTHER" id="PTHR10569">
    <property type="entry name" value="GLYCOGEN DEBRANCHING ENZYME"/>
    <property type="match status" value="1"/>
</dbReference>
<dbReference type="PANTHER" id="PTHR10569:SF2">
    <property type="entry name" value="GLYCOGEN DEBRANCHING ENZYME"/>
    <property type="match status" value="1"/>
</dbReference>
<dbReference type="Pfam" id="PF06202">
    <property type="entry name" value="GDE_C"/>
    <property type="match status" value="1"/>
</dbReference>
<dbReference type="Pfam" id="PF14701">
    <property type="entry name" value="hDGE_amylase"/>
    <property type="match status" value="1"/>
</dbReference>
<dbReference type="Pfam" id="PF14702">
    <property type="entry name" value="hGDE_central"/>
    <property type="match status" value="1"/>
</dbReference>
<dbReference type="Pfam" id="PF14699">
    <property type="entry name" value="hGDE_N"/>
    <property type="match status" value="1"/>
</dbReference>
<dbReference type="SUPFAM" id="SSF51445">
    <property type="entry name" value="(Trans)glycosidases"/>
    <property type="match status" value="1"/>
</dbReference>
<dbReference type="SUPFAM" id="SSF48208">
    <property type="entry name" value="Six-hairpin glycosidases"/>
    <property type="match status" value="1"/>
</dbReference>
<evidence type="ECO:0000250" key="1"/>
<evidence type="ECO:0000250" key="2">
    <source>
        <dbReference type="UniProtKB" id="P35573"/>
    </source>
</evidence>
<evidence type="ECO:0000305" key="3"/>
<protein>
    <recommendedName>
        <fullName>Glycogen debranching enzyme</fullName>
    </recommendedName>
    <alternativeName>
        <fullName>Glycogen debrancher</fullName>
    </alternativeName>
    <domain>
        <recommendedName>
            <fullName>4-alpha-glucanotransferase</fullName>
            <ecNumber>2.4.1.25</ecNumber>
        </recommendedName>
        <alternativeName>
            <fullName>Oligo-1,4-1,4-glucantransferase</fullName>
        </alternativeName>
    </domain>
    <domain>
        <recommendedName>
            <fullName>Amylo-alpha-1,6-glucosidase</fullName>
            <shortName>Amylo-1,6-glucosidase</shortName>
            <ecNumber>3.2.1.33</ecNumber>
        </recommendedName>
        <alternativeName>
            <fullName>Dextrin 6-alpha-D-glucosidase</fullName>
        </alternativeName>
    </domain>
</protein>
<keyword id="KW-0963">Cytoplasm</keyword>
<keyword id="KW-0903">Direct protein sequencing</keyword>
<keyword id="KW-0320">Glycogen biosynthesis</keyword>
<keyword id="KW-0326">Glycosidase</keyword>
<keyword id="KW-0328">Glycosyltransferase</keyword>
<keyword id="KW-0378">Hydrolase</keyword>
<keyword id="KW-0511">Multifunctional enzyme</keyword>
<keyword id="KW-0597">Phosphoprotein</keyword>
<keyword id="KW-1185">Reference proteome</keyword>
<keyword id="KW-0808">Transferase</keyword>
<keyword id="KW-0832">Ubl conjugation</keyword>
<proteinExistence type="evidence at protein level"/>